<reference key="1">
    <citation type="journal article" date="1995" name="Clin. Mol. Pathol.">
        <title>Rapid identification of mycobacteria from AIDS patients by capillary electrophoretic profiling of amplified SOD gene.</title>
        <authorList>
            <person name="Bull T.J."/>
            <person name="Shanson D.C."/>
            <person name="Archard L.C."/>
        </authorList>
    </citation>
    <scope>NUCLEOTIDE SEQUENCE [GENOMIC DNA]</scope>
    <source>
        <strain>ATCC 927 / DSM 44344 / JCM 12275 / NCTC 2275 / TMC 1218</strain>
    </source>
</reference>
<name>SODM_MYCMR</name>
<proteinExistence type="inferred from homology"/>
<feature type="chain" id="PRO_0000160055" description="Superoxide dismutase [Mn]">
    <location>
        <begin position="1" status="less than"/>
        <end position="138" status="greater than"/>
    </location>
</feature>
<feature type="binding site" evidence="1">
    <location>
        <position position="1"/>
    </location>
    <ligand>
        <name>Mn(2+)</name>
        <dbReference type="ChEBI" id="CHEBI:29035"/>
    </ligand>
</feature>
<feature type="binding site" evidence="1">
    <location>
        <position position="49"/>
    </location>
    <ligand>
        <name>Mn(2+)</name>
        <dbReference type="ChEBI" id="CHEBI:29035"/>
    </ligand>
</feature>
<feature type="binding site" evidence="1">
    <location>
        <position position="133"/>
    </location>
    <ligand>
        <name>Mn(2+)</name>
        <dbReference type="ChEBI" id="CHEBI:29035"/>
    </ligand>
</feature>
<feature type="binding site" evidence="1">
    <location>
        <position position="137"/>
    </location>
    <ligand>
        <name>Mn(2+)</name>
        <dbReference type="ChEBI" id="CHEBI:29035"/>
    </ligand>
</feature>
<feature type="non-terminal residue">
    <location>
        <position position="1"/>
    </location>
</feature>
<feature type="non-terminal residue">
    <location>
        <position position="138"/>
    </location>
</feature>
<protein>
    <recommendedName>
        <fullName>Superoxide dismutase [Mn]</fullName>
        <ecNumber>1.15.1.1</ecNumber>
    </recommendedName>
</protein>
<evidence type="ECO:0000250" key="1"/>
<evidence type="ECO:0000305" key="2"/>
<gene>
    <name type="primary">sodA</name>
    <name type="synonym">sod</name>
</gene>
<sequence length="138" mass="15200">SHSKHHATYVKGANDAVTKLEEARAKEDHSTILLNEKNLAFNLAGHVNHTIWWKNLSPNGGDKPTGELAAAIDEAFGSFDKFRAQFHAAATTVQGSGWAALGWDTLGNKLLIFQVYDHQTNFPLGIVPLLLLDMWEHA</sequence>
<organism>
    <name type="scientific">Mycobacterium marinum</name>
    <dbReference type="NCBI Taxonomy" id="1781"/>
    <lineage>
        <taxon>Bacteria</taxon>
        <taxon>Bacillati</taxon>
        <taxon>Actinomycetota</taxon>
        <taxon>Actinomycetes</taxon>
        <taxon>Mycobacteriales</taxon>
        <taxon>Mycobacteriaceae</taxon>
        <taxon>Mycobacterium</taxon>
        <taxon>Mycobacterium ulcerans group</taxon>
    </lineage>
</organism>
<dbReference type="EC" id="1.15.1.1"/>
<dbReference type="EMBL" id="Z48208">
    <property type="protein sequence ID" value="CAA88241.1"/>
    <property type="molecule type" value="Genomic_DNA"/>
</dbReference>
<dbReference type="PIR" id="S52365">
    <property type="entry name" value="S52365"/>
</dbReference>
<dbReference type="SMR" id="P53646"/>
<dbReference type="GO" id="GO:0046872">
    <property type="term" value="F:metal ion binding"/>
    <property type="evidence" value="ECO:0007669"/>
    <property type="project" value="UniProtKB-KW"/>
</dbReference>
<dbReference type="GO" id="GO:0004784">
    <property type="term" value="F:superoxide dismutase activity"/>
    <property type="evidence" value="ECO:0007669"/>
    <property type="project" value="UniProtKB-EC"/>
</dbReference>
<dbReference type="FunFam" id="1.10.287.990:FF:000001">
    <property type="entry name" value="Superoxide dismutase"/>
    <property type="match status" value="1"/>
</dbReference>
<dbReference type="Gene3D" id="1.10.287.990">
    <property type="entry name" value="Fe,Mn superoxide dismutase (SOD) domain"/>
    <property type="match status" value="1"/>
</dbReference>
<dbReference type="Gene3D" id="3.55.40.20">
    <property type="entry name" value="Iron/manganese superoxide dismutase, C-terminal domain"/>
    <property type="match status" value="1"/>
</dbReference>
<dbReference type="InterPro" id="IPR050265">
    <property type="entry name" value="Fe/Mn_Superoxide_Dismutase"/>
</dbReference>
<dbReference type="InterPro" id="IPR001189">
    <property type="entry name" value="Mn/Fe_SOD"/>
</dbReference>
<dbReference type="InterPro" id="IPR019832">
    <property type="entry name" value="Mn/Fe_SOD_C"/>
</dbReference>
<dbReference type="InterPro" id="IPR019831">
    <property type="entry name" value="Mn/Fe_SOD_N"/>
</dbReference>
<dbReference type="InterPro" id="IPR036324">
    <property type="entry name" value="Mn/Fe_SOD_N_sf"/>
</dbReference>
<dbReference type="InterPro" id="IPR036314">
    <property type="entry name" value="SOD_C_sf"/>
</dbReference>
<dbReference type="PANTHER" id="PTHR11404">
    <property type="entry name" value="SUPEROXIDE DISMUTASE 2"/>
    <property type="match status" value="1"/>
</dbReference>
<dbReference type="PANTHER" id="PTHR11404:SF6">
    <property type="entry name" value="SUPEROXIDE DISMUTASE [MN], MITOCHONDRIAL"/>
    <property type="match status" value="1"/>
</dbReference>
<dbReference type="Pfam" id="PF02777">
    <property type="entry name" value="Sod_Fe_C"/>
    <property type="match status" value="1"/>
</dbReference>
<dbReference type="Pfam" id="PF00081">
    <property type="entry name" value="Sod_Fe_N"/>
    <property type="match status" value="1"/>
</dbReference>
<dbReference type="PRINTS" id="PR01703">
    <property type="entry name" value="MNSODISMTASE"/>
</dbReference>
<dbReference type="SUPFAM" id="SSF54719">
    <property type="entry name" value="Fe,Mn superoxide dismutase (SOD), C-terminal domain"/>
    <property type="match status" value="1"/>
</dbReference>
<dbReference type="SUPFAM" id="SSF46609">
    <property type="entry name" value="Fe,Mn superoxide dismutase (SOD), N-terminal domain"/>
    <property type="match status" value="1"/>
</dbReference>
<keyword id="KW-0464">Manganese</keyword>
<keyword id="KW-0479">Metal-binding</keyword>
<keyword id="KW-0560">Oxidoreductase</keyword>
<accession>P53646</accession>
<comment type="function">
    <text>Destroys superoxide anion radicals which are normally produced within the cells and which are toxic to biological systems.</text>
</comment>
<comment type="catalytic activity">
    <reaction>
        <text>2 superoxide + 2 H(+) = H2O2 + O2</text>
        <dbReference type="Rhea" id="RHEA:20696"/>
        <dbReference type="ChEBI" id="CHEBI:15378"/>
        <dbReference type="ChEBI" id="CHEBI:15379"/>
        <dbReference type="ChEBI" id="CHEBI:16240"/>
        <dbReference type="ChEBI" id="CHEBI:18421"/>
        <dbReference type="EC" id="1.15.1.1"/>
    </reaction>
</comment>
<comment type="cofactor">
    <cofactor evidence="1">
        <name>Mn(2+)</name>
        <dbReference type="ChEBI" id="CHEBI:29035"/>
    </cofactor>
    <text evidence="1">Binds 1 Mn(2+) ion per subunit.</text>
</comment>
<comment type="similarity">
    <text evidence="2">Belongs to the iron/manganese superoxide dismutase family.</text>
</comment>